<proteinExistence type="evidence at protein level"/>
<evidence type="ECO:0000269" key="1">
    <source ref="5"/>
</evidence>
<evidence type="ECO:0000305" key="2"/>
<feature type="initiator methionine" description="Removed" evidence="1">
    <location>
        <position position="1"/>
    </location>
</feature>
<feature type="chain" id="PRO_0000128711" description="Malate:quinone oxidoreductase">
    <location>
        <begin position="2"/>
        <end position="500"/>
    </location>
</feature>
<name>MQO_CORGL</name>
<dbReference type="EC" id="1.1.5.4"/>
<dbReference type="EMBL" id="AJ224946">
    <property type="protein sequence ID" value="CAA12237.1"/>
    <property type="molecule type" value="Genomic_DNA"/>
</dbReference>
<dbReference type="EMBL" id="BA000036">
    <property type="protein sequence ID" value="BAB99394.1"/>
    <property type="molecule type" value="Genomic_DNA"/>
</dbReference>
<dbReference type="EMBL" id="BX927153">
    <property type="protein sequence ID" value="CAF20342.1"/>
    <property type="molecule type" value="Genomic_DNA"/>
</dbReference>
<dbReference type="RefSeq" id="NP_601207.1">
    <property type="nucleotide sequence ID" value="NC_003450.3"/>
</dbReference>
<dbReference type="RefSeq" id="WP_011014814.1">
    <property type="nucleotide sequence ID" value="NC_006958.1"/>
</dbReference>
<dbReference type="SMR" id="O69282"/>
<dbReference type="STRING" id="196627.cg2192"/>
<dbReference type="GeneID" id="1019958"/>
<dbReference type="KEGG" id="cgb:cg2192"/>
<dbReference type="KEGG" id="cgl:Cgl2001"/>
<dbReference type="PATRIC" id="fig|196627.13.peg.1940"/>
<dbReference type="eggNOG" id="COG0579">
    <property type="taxonomic scope" value="Bacteria"/>
</dbReference>
<dbReference type="HOGENOM" id="CLU_028151_0_0_11"/>
<dbReference type="OrthoDB" id="9763983at2"/>
<dbReference type="BioCyc" id="CORYNE:G18NG-11593-MONOMER"/>
<dbReference type="BRENDA" id="1.1.5.4">
    <property type="organism ID" value="960"/>
</dbReference>
<dbReference type="UniPathway" id="UPA00223">
    <property type="reaction ID" value="UER01008"/>
</dbReference>
<dbReference type="Proteomes" id="UP000000582">
    <property type="component" value="Chromosome"/>
</dbReference>
<dbReference type="Proteomes" id="UP000001009">
    <property type="component" value="Chromosome"/>
</dbReference>
<dbReference type="GO" id="GO:0005886">
    <property type="term" value="C:plasma membrane"/>
    <property type="evidence" value="ECO:0007669"/>
    <property type="project" value="UniProtKB-SubCell"/>
</dbReference>
<dbReference type="GO" id="GO:0047545">
    <property type="term" value="F:2-hydroxyglutarate dehydrogenase activity"/>
    <property type="evidence" value="ECO:0007669"/>
    <property type="project" value="TreeGrafter"/>
</dbReference>
<dbReference type="GO" id="GO:0008924">
    <property type="term" value="F:L-malate dehydrogenase (quinone) activity"/>
    <property type="evidence" value="ECO:0007669"/>
    <property type="project" value="UniProtKB-UniRule"/>
</dbReference>
<dbReference type="GO" id="GO:0006099">
    <property type="term" value="P:tricarboxylic acid cycle"/>
    <property type="evidence" value="ECO:0007669"/>
    <property type="project" value="UniProtKB-UniRule"/>
</dbReference>
<dbReference type="Gene3D" id="3.30.9.10">
    <property type="entry name" value="D-Amino Acid Oxidase, subunit A, domain 2"/>
    <property type="match status" value="1"/>
</dbReference>
<dbReference type="Gene3D" id="3.50.50.60">
    <property type="entry name" value="FAD/NAD(P)-binding domain"/>
    <property type="match status" value="1"/>
</dbReference>
<dbReference type="HAMAP" id="MF_00212">
    <property type="entry name" value="MQO"/>
    <property type="match status" value="1"/>
</dbReference>
<dbReference type="InterPro" id="IPR036188">
    <property type="entry name" value="FAD/NAD-bd_sf"/>
</dbReference>
<dbReference type="InterPro" id="IPR006231">
    <property type="entry name" value="MQO"/>
</dbReference>
<dbReference type="NCBIfam" id="TIGR01320">
    <property type="entry name" value="mal_quin_oxido"/>
    <property type="match status" value="1"/>
</dbReference>
<dbReference type="NCBIfam" id="NF003606">
    <property type="entry name" value="PRK05257.2-1"/>
    <property type="match status" value="1"/>
</dbReference>
<dbReference type="NCBIfam" id="NF003611">
    <property type="entry name" value="PRK05257.3-2"/>
    <property type="match status" value="1"/>
</dbReference>
<dbReference type="NCBIfam" id="NF009875">
    <property type="entry name" value="PRK13339.1"/>
    <property type="match status" value="1"/>
</dbReference>
<dbReference type="PANTHER" id="PTHR43104">
    <property type="entry name" value="L-2-HYDROXYGLUTARATE DEHYDROGENASE, MITOCHONDRIAL"/>
    <property type="match status" value="1"/>
</dbReference>
<dbReference type="PANTHER" id="PTHR43104:SF2">
    <property type="entry name" value="L-2-HYDROXYGLUTARATE DEHYDROGENASE, MITOCHONDRIAL"/>
    <property type="match status" value="1"/>
</dbReference>
<dbReference type="Pfam" id="PF06039">
    <property type="entry name" value="Mqo"/>
    <property type="match status" value="1"/>
</dbReference>
<dbReference type="SUPFAM" id="SSF51905">
    <property type="entry name" value="FAD/NAD(P)-binding domain"/>
    <property type="match status" value="1"/>
</dbReference>
<comment type="catalytic activity">
    <reaction>
        <text>(S)-malate + a quinone = a quinol + oxaloacetate</text>
        <dbReference type="Rhea" id="RHEA:46012"/>
        <dbReference type="ChEBI" id="CHEBI:15589"/>
        <dbReference type="ChEBI" id="CHEBI:16452"/>
        <dbReference type="ChEBI" id="CHEBI:24646"/>
        <dbReference type="ChEBI" id="CHEBI:132124"/>
        <dbReference type="EC" id="1.1.5.4"/>
    </reaction>
</comment>
<comment type="cofactor">
    <cofactor>
        <name>FAD</name>
        <dbReference type="ChEBI" id="CHEBI:57692"/>
    </cofactor>
    <text>The FAD is tightly bound.</text>
</comment>
<comment type="activity regulation">
    <text>Activated by lipids.</text>
</comment>
<comment type="pathway">
    <text>Carbohydrate metabolism; tricarboxylic acid cycle; oxaloacetate from (S)-malate (quinone route): step 1/1.</text>
</comment>
<comment type="subcellular location">
    <subcellularLocation>
        <location>Cell membrane</location>
        <topology>Peripheral membrane protein</topology>
    </subcellularLocation>
</comment>
<comment type="similarity">
    <text evidence="2">Belongs to the MQO family.</text>
</comment>
<sequence>MSDSPKNAPRITDEADVVLIGAGIMSSTLGAMLRQLEPSWTQIVFERLDGPAQESSSPWNNAGTGHSALCELNYTPEVKGKVEIAKAVGINEKFQVSRQFWSHLVEEGVLSDPKEFINPVPHVSFGQGADQVAYIKARYEALKDHPLFQGMTYADDEATFTEKLPLMAKGRDFSDPVAISWIDEGTDINYGAQTKQYLDAAEVEGTEIRYGHEVKSIKADGAKWIVTVKNVHTGDTKTIKANFVFVGAGGYALDLLRSAGIPQVKGFAGFPVSGLWLRCTNEELIEQHAAKVYGKASVGAPPMSVPHLDTRVIEGEKGLLFGPYGGWTPKFLKEGSYLDLFKSIRPDNIPSYLGVAAQEFDLTKYLVTEVLKDQDKRMDALREYMPEAQNGDWETIVAGQRVQVIKPAGFPKFGSLEFGTTLINNSEGTIAGLLGASPGASIAPSAMIELLERCFGDRMIEWGDKLKDMIPSYGKKLASEPALFEQQWARTQKTLKLEEA</sequence>
<accession>O69282</accession>
<keyword id="KW-1003">Cell membrane</keyword>
<keyword id="KW-0903">Direct protein sequencing</keyword>
<keyword id="KW-0274">FAD</keyword>
<keyword id="KW-0285">Flavoprotein</keyword>
<keyword id="KW-0472">Membrane</keyword>
<keyword id="KW-0560">Oxidoreductase</keyword>
<keyword id="KW-1185">Reference proteome</keyword>
<keyword id="KW-0816">Tricarboxylic acid cycle</keyword>
<organism>
    <name type="scientific">Corynebacterium glutamicum (strain ATCC 13032 / DSM 20300 / JCM 1318 / BCRC 11384 / CCUG 27702 / LMG 3730 / NBRC 12168 / NCIMB 10025 / NRRL B-2784 / 534)</name>
    <dbReference type="NCBI Taxonomy" id="196627"/>
    <lineage>
        <taxon>Bacteria</taxon>
        <taxon>Bacillati</taxon>
        <taxon>Actinomycetota</taxon>
        <taxon>Actinomycetes</taxon>
        <taxon>Mycobacteriales</taxon>
        <taxon>Corynebacteriaceae</taxon>
        <taxon>Corynebacterium</taxon>
    </lineage>
</organism>
<reference key="1">
    <citation type="journal article" date="1998" name="Eur. J. Biochem.">
        <title>Biochemical and genetic characterization of the membrane-associated malate dehydrogenase (acceptor) from Corynebacterium glutamicum.</title>
        <authorList>
            <person name="Molenaar D."/>
            <person name="van der Rest M.E."/>
            <person name="Petrovic S."/>
        </authorList>
    </citation>
    <scope>NUCLEOTIDE SEQUENCE [GENOMIC DNA]</scope>
    <source>
        <strain>R127</strain>
    </source>
</reference>
<reference key="2">
    <citation type="submission" date="1998-08" db="EMBL/GenBank/DDBJ databases">
        <authorList>
            <person name="van der Rest M.E."/>
        </authorList>
    </citation>
    <scope>SEQUENCE REVISION TO N-TERMINUS</scope>
</reference>
<reference key="3">
    <citation type="journal article" date="2003" name="Appl. Microbiol. Biotechnol.">
        <title>The Corynebacterium glutamicum genome: features and impacts on biotechnological processes.</title>
        <authorList>
            <person name="Ikeda M."/>
            <person name="Nakagawa S."/>
        </authorList>
    </citation>
    <scope>NUCLEOTIDE SEQUENCE [LARGE SCALE GENOMIC DNA]</scope>
    <source>
        <strain>ATCC 13032 / DSM 20300 / JCM 1318 / BCRC 11384 / CCUG 27702 / LMG 3730 / NBRC 12168 / NCIMB 10025 / NRRL B-2784 / 534</strain>
    </source>
</reference>
<reference key="4">
    <citation type="journal article" date="2003" name="J. Biotechnol.">
        <title>The complete Corynebacterium glutamicum ATCC 13032 genome sequence and its impact on the production of L-aspartate-derived amino acids and vitamins.</title>
        <authorList>
            <person name="Kalinowski J."/>
            <person name="Bathe B."/>
            <person name="Bartels D."/>
            <person name="Bischoff N."/>
            <person name="Bott M."/>
            <person name="Burkovski A."/>
            <person name="Dusch N."/>
            <person name="Eggeling L."/>
            <person name="Eikmanns B.J."/>
            <person name="Gaigalat L."/>
            <person name="Goesmann A."/>
            <person name="Hartmann M."/>
            <person name="Huthmacher K."/>
            <person name="Kraemer R."/>
            <person name="Linke B."/>
            <person name="McHardy A.C."/>
            <person name="Meyer F."/>
            <person name="Moeckel B."/>
            <person name="Pfefferle W."/>
            <person name="Puehler A."/>
            <person name="Rey D.A."/>
            <person name="Rueckert C."/>
            <person name="Rupp O."/>
            <person name="Sahm H."/>
            <person name="Wendisch V.F."/>
            <person name="Wiegraebe I."/>
            <person name="Tauch A."/>
        </authorList>
    </citation>
    <scope>NUCLEOTIDE SEQUENCE [LARGE SCALE GENOMIC DNA]</scope>
    <source>
        <strain>ATCC 13032 / DSM 20300 / JCM 1318 / BCRC 11384 / CCUG 27702 / LMG 3730 / NBRC 12168 / NCIMB 10025 / NRRL B-2784 / 534</strain>
    </source>
</reference>
<reference key="5">
    <citation type="submission" date="1998-08" db="UniProtKB">
        <authorList>
            <person name="Molenaar D."/>
            <person name="van der Rest M.E."/>
            <person name="Petrovic S."/>
        </authorList>
    </citation>
    <scope>PROTEIN SEQUENCE OF 2-6</scope>
    <source>
        <strain>R127</strain>
    </source>
</reference>
<protein>
    <recommendedName>
        <fullName>Malate:quinone oxidoreductase</fullName>
        <ecNumber>1.1.5.4</ecNumber>
    </recommendedName>
    <alternativeName>
        <fullName>MQO</fullName>
    </alternativeName>
    <alternativeName>
        <fullName>Malate dehydrogenase [quinone]</fullName>
    </alternativeName>
</protein>
<gene>
    <name type="primary">mqo</name>
    <name type="ordered locus">Cgl2001</name>
    <name type="ordered locus">cg2192</name>
</gene>